<evidence type="ECO:0000255" key="1">
    <source>
        <dbReference type="HAMAP-Rule" id="MF_01345"/>
    </source>
</evidence>
<evidence type="ECO:0000305" key="2"/>
<comment type="function">
    <text evidence="1">One of the primary rRNA binding proteins, it binds specifically to the 5'-end of 16S ribosomal RNA.</text>
</comment>
<comment type="subunit">
    <text evidence="1">Part of the 30S ribosomal subunit.</text>
</comment>
<comment type="similarity">
    <text evidence="1">Belongs to the universal ribosomal protein uS17 family.</text>
</comment>
<reference key="1">
    <citation type="journal article" date="2007" name="Nat. Biotechnol.">
        <title>Genome sequence and identification of candidate vaccine antigens from the animal pathogen Dichelobacter nodosus.</title>
        <authorList>
            <person name="Myers G.S.A."/>
            <person name="Parker D."/>
            <person name="Al-Hasani K."/>
            <person name="Kennan R.M."/>
            <person name="Seemann T."/>
            <person name="Ren Q."/>
            <person name="Badger J.H."/>
            <person name="Selengut J.D."/>
            <person name="Deboy R.T."/>
            <person name="Tettelin H."/>
            <person name="Boyce J.D."/>
            <person name="McCarl V.P."/>
            <person name="Han X."/>
            <person name="Nelson W.C."/>
            <person name="Madupu R."/>
            <person name="Mohamoud Y."/>
            <person name="Holley T."/>
            <person name="Fedorova N."/>
            <person name="Khouri H."/>
            <person name="Bottomley S.P."/>
            <person name="Whittington R.J."/>
            <person name="Adler B."/>
            <person name="Songer J.G."/>
            <person name="Rood J.I."/>
            <person name="Paulsen I.T."/>
        </authorList>
    </citation>
    <scope>NUCLEOTIDE SEQUENCE [LARGE SCALE GENOMIC DNA]</scope>
    <source>
        <strain>VCS1703A</strain>
    </source>
</reference>
<feature type="chain" id="PRO_1000054948" description="Small ribosomal subunit protein uS17">
    <location>
        <begin position="1"/>
        <end position="87"/>
    </location>
</feature>
<proteinExistence type="inferred from homology"/>
<name>RS17_DICNV</name>
<organism>
    <name type="scientific">Dichelobacter nodosus (strain VCS1703A)</name>
    <dbReference type="NCBI Taxonomy" id="246195"/>
    <lineage>
        <taxon>Bacteria</taxon>
        <taxon>Pseudomonadati</taxon>
        <taxon>Pseudomonadota</taxon>
        <taxon>Gammaproteobacteria</taxon>
        <taxon>Cardiobacteriales</taxon>
        <taxon>Cardiobacteriaceae</taxon>
        <taxon>Dichelobacter</taxon>
    </lineage>
</organism>
<keyword id="KW-1185">Reference proteome</keyword>
<keyword id="KW-0687">Ribonucleoprotein</keyword>
<keyword id="KW-0689">Ribosomal protein</keyword>
<keyword id="KW-0694">RNA-binding</keyword>
<keyword id="KW-0699">rRNA-binding</keyword>
<gene>
    <name evidence="1" type="primary">rpsQ</name>
    <name type="ordered locus">DNO_1266</name>
</gene>
<protein>
    <recommendedName>
        <fullName evidence="1">Small ribosomal subunit protein uS17</fullName>
    </recommendedName>
    <alternativeName>
        <fullName evidence="2">30S ribosomal protein S17</fullName>
    </alternativeName>
</protein>
<dbReference type="EMBL" id="CP000513">
    <property type="protein sequence ID" value="ABQ14119.1"/>
    <property type="molecule type" value="Genomic_DNA"/>
</dbReference>
<dbReference type="RefSeq" id="WP_012031561.1">
    <property type="nucleotide sequence ID" value="NC_009446.1"/>
</dbReference>
<dbReference type="SMR" id="A5EX90"/>
<dbReference type="STRING" id="246195.DNO_1266"/>
<dbReference type="KEGG" id="dno:DNO_1266"/>
<dbReference type="eggNOG" id="COG0186">
    <property type="taxonomic scope" value="Bacteria"/>
</dbReference>
<dbReference type="HOGENOM" id="CLU_073626_1_1_6"/>
<dbReference type="OrthoDB" id="9811714at2"/>
<dbReference type="Proteomes" id="UP000000248">
    <property type="component" value="Chromosome"/>
</dbReference>
<dbReference type="GO" id="GO:0022627">
    <property type="term" value="C:cytosolic small ribosomal subunit"/>
    <property type="evidence" value="ECO:0007669"/>
    <property type="project" value="TreeGrafter"/>
</dbReference>
<dbReference type="GO" id="GO:0019843">
    <property type="term" value="F:rRNA binding"/>
    <property type="evidence" value="ECO:0007669"/>
    <property type="project" value="UniProtKB-UniRule"/>
</dbReference>
<dbReference type="GO" id="GO:0003735">
    <property type="term" value="F:structural constituent of ribosome"/>
    <property type="evidence" value="ECO:0007669"/>
    <property type="project" value="InterPro"/>
</dbReference>
<dbReference type="GO" id="GO:0006412">
    <property type="term" value="P:translation"/>
    <property type="evidence" value="ECO:0007669"/>
    <property type="project" value="UniProtKB-UniRule"/>
</dbReference>
<dbReference type="CDD" id="cd00364">
    <property type="entry name" value="Ribosomal_uS17"/>
    <property type="match status" value="1"/>
</dbReference>
<dbReference type="Gene3D" id="2.40.50.140">
    <property type="entry name" value="Nucleic acid-binding proteins"/>
    <property type="match status" value="1"/>
</dbReference>
<dbReference type="HAMAP" id="MF_01345_B">
    <property type="entry name" value="Ribosomal_uS17_B"/>
    <property type="match status" value="1"/>
</dbReference>
<dbReference type="InterPro" id="IPR012340">
    <property type="entry name" value="NA-bd_OB-fold"/>
</dbReference>
<dbReference type="InterPro" id="IPR000266">
    <property type="entry name" value="Ribosomal_uS17"/>
</dbReference>
<dbReference type="InterPro" id="IPR019984">
    <property type="entry name" value="Ribosomal_uS17_bact/chlr"/>
</dbReference>
<dbReference type="InterPro" id="IPR019979">
    <property type="entry name" value="Ribosomal_uS17_CS"/>
</dbReference>
<dbReference type="NCBIfam" id="NF004123">
    <property type="entry name" value="PRK05610.1"/>
    <property type="match status" value="1"/>
</dbReference>
<dbReference type="NCBIfam" id="TIGR03635">
    <property type="entry name" value="uS17_bact"/>
    <property type="match status" value="1"/>
</dbReference>
<dbReference type="PANTHER" id="PTHR10744">
    <property type="entry name" value="40S RIBOSOMAL PROTEIN S11 FAMILY MEMBER"/>
    <property type="match status" value="1"/>
</dbReference>
<dbReference type="PANTHER" id="PTHR10744:SF1">
    <property type="entry name" value="SMALL RIBOSOMAL SUBUNIT PROTEIN US17M"/>
    <property type="match status" value="1"/>
</dbReference>
<dbReference type="Pfam" id="PF00366">
    <property type="entry name" value="Ribosomal_S17"/>
    <property type="match status" value="1"/>
</dbReference>
<dbReference type="PRINTS" id="PR00973">
    <property type="entry name" value="RIBOSOMALS17"/>
</dbReference>
<dbReference type="SUPFAM" id="SSF50249">
    <property type="entry name" value="Nucleic acid-binding proteins"/>
    <property type="match status" value="1"/>
</dbReference>
<dbReference type="PROSITE" id="PS00056">
    <property type="entry name" value="RIBOSOMAL_S17"/>
    <property type="match status" value="1"/>
</dbReference>
<sequence length="87" mass="10086">MTEKQVIHRILQGEVVSNKSDKSITVTVVRYVKHPLYGKYIKRTLRCHAHDENNECNIGDVVRISQSRPISKTKTWRLVEIVERAKG</sequence>
<accession>A5EX90</accession>